<reference key="1">
    <citation type="journal article" date="2006" name="Mol. Microbiol.">
        <title>Role of pathogenicity island-associated integrases in the genome plasticity of uropathogenic Escherichia coli strain 536.</title>
        <authorList>
            <person name="Hochhut B."/>
            <person name="Wilde C."/>
            <person name="Balling G."/>
            <person name="Middendorf B."/>
            <person name="Dobrindt U."/>
            <person name="Brzuszkiewicz E."/>
            <person name="Gottschalk G."/>
            <person name="Carniel E."/>
            <person name="Hacker J."/>
        </authorList>
    </citation>
    <scope>NUCLEOTIDE SEQUENCE [LARGE SCALE GENOMIC DNA]</scope>
    <source>
        <strain>536 / UPEC</strain>
    </source>
</reference>
<organism>
    <name type="scientific">Escherichia coli O6:K15:H31 (strain 536 / UPEC)</name>
    <dbReference type="NCBI Taxonomy" id="362663"/>
    <lineage>
        <taxon>Bacteria</taxon>
        <taxon>Pseudomonadati</taxon>
        <taxon>Pseudomonadota</taxon>
        <taxon>Gammaproteobacteria</taxon>
        <taxon>Enterobacterales</taxon>
        <taxon>Enterobacteriaceae</taxon>
        <taxon>Escherichia</taxon>
    </lineage>
</organism>
<gene>
    <name evidence="1" type="primary">rihA</name>
    <name type="ordered locus">ECP_0674</name>
</gene>
<evidence type="ECO:0000255" key="1">
    <source>
        <dbReference type="HAMAP-Rule" id="MF_01431"/>
    </source>
</evidence>
<feature type="chain" id="PRO_1000024395" description="Pyrimidine-specific ribonucleoside hydrolase RihA">
    <location>
        <begin position="1"/>
        <end position="311"/>
    </location>
</feature>
<feature type="active site" evidence="1">
    <location>
        <position position="240"/>
    </location>
</feature>
<name>RIHA_ECOL5</name>
<sequence length="311" mass="33857">MALPILLDCDPGHDDAIAIVLALASPELDVKAITSSAGNQTPEKTLRNVLRMLTLLNRTDIPVASGAVKPLMRNLIIADNVHGESGLDGPALPEPTFAPQNCTAVELMAKTLCESEEPVTIVSTGPQTNVALLLNSHPELHSKIARIVIMGGAMGLGNWTPAAEFNIYVDPEAAEIVFQSGIPVVMAGLDVTHKAQIHVEDTERFRAIGNPVSTIVAELLDFFLEYHKDEKWGFVGAPLHDPCTIAWLLKPELFTTVERWVGVETQGKYTQGMTVVDYYYLTGNKPNATVMVDVDRQGFVDLLADRLKFYA</sequence>
<comment type="function">
    <text evidence="1">Hydrolyzes with equal efficiency cytidine or uridine to ribose and cytosine or uracil, respectively.</text>
</comment>
<comment type="similarity">
    <text evidence="1">Belongs to the IUNH family. RihA subfamily.</text>
</comment>
<accession>Q0TK29</accession>
<protein>
    <recommendedName>
        <fullName evidence="1">Pyrimidine-specific ribonucleoside hydrolase RihA</fullName>
        <ecNumber evidence="1">3.2.-.-</ecNumber>
    </recommendedName>
    <alternativeName>
        <fullName evidence="1">Cytidine/uridine-specific hydrolase</fullName>
    </alternativeName>
</protein>
<dbReference type="EC" id="3.2.-.-" evidence="1"/>
<dbReference type="EMBL" id="CP000247">
    <property type="protein sequence ID" value="ABG68702.1"/>
    <property type="molecule type" value="Genomic_DNA"/>
</dbReference>
<dbReference type="RefSeq" id="WP_001207538.1">
    <property type="nucleotide sequence ID" value="NC_008253.1"/>
</dbReference>
<dbReference type="SMR" id="Q0TK29"/>
<dbReference type="KEGG" id="ecp:ECP_0674"/>
<dbReference type="HOGENOM" id="CLU_036838_2_0_6"/>
<dbReference type="Proteomes" id="UP000009182">
    <property type="component" value="Chromosome"/>
</dbReference>
<dbReference type="GO" id="GO:0005829">
    <property type="term" value="C:cytosol"/>
    <property type="evidence" value="ECO:0007669"/>
    <property type="project" value="TreeGrafter"/>
</dbReference>
<dbReference type="GO" id="GO:0008477">
    <property type="term" value="F:purine nucleosidase activity"/>
    <property type="evidence" value="ECO:0007669"/>
    <property type="project" value="TreeGrafter"/>
</dbReference>
<dbReference type="GO" id="GO:0045437">
    <property type="term" value="F:uridine nucleosidase activity"/>
    <property type="evidence" value="ECO:0007669"/>
    <property type="project" value="InterPro"/>
</dbReference>
<dbReference type="GO" id="GO:0015949">
    <property type="term" value="P:nucleobase-containing small molecule interconversion"/>
    <property type="evidence" value="ECO:0007669"/>
    <property type="project" value="InterPro"/>
</dbReference>
<dbReference type="GO" id="GO:0006152">
    <property type="term" value="P:purine nucleoside catabolic process"/>
    <property type="evidence" value="ECO:0007669"/>
    <property type="project" value="TreeGrafter"/>
</dbReference>
<dbReference type="GO" id="GO:0006206">
    <property type="term" value="P:pyrimidine nucleobase metabolic process"/>
    <property type="evidence" value="ECO:0007669"/>
    <property type="project" value="UniProtKB-UniRule"/>
</dbReference>
<dbReference type="CDD" id="cd02651">
    <property type="entry name" value="nuc_hydro_IU_UC_XIUA"/>
    <property type="match status" value="1"/>
</dbReference>
<dbReference type="FunFam" id="3.90.245.10:FF:000001">
    <property type="entry name" value="Pyrimidine-specific ribonucleoside hydrolase RihA"/>
    <property type="match status" value="1"/>
</dbReference>
<dbReference type="Gene3D" id="3.90.245.10">
    <property type="entry name" value="Ribonucleoside hydrolase-like"/>
    <property type="match status" value="1"/>
</dbReference>
<dbReference type="HAMAP" id="MF_01431">
    <property type="entry name" value="Pyrim_hydro_RihA"/>
    <property type="match status" value="1"/>
</dbReference>
<dbReference type="InterPro" id="IPR015910">
    <property type="entry name" value="I/U_nuclsd_hydro_CS"/>
</dbReference>
<dbReference type="InterPro" id="IPR001910">
    <property type="entry name" value="Inosine/uridine_hydrolase_dom"/>
</dbReference>
<dbReference type="InterPro" id="IPR023186">
    <property type="entry name" value="IUNH"/>
</dbReference>
<dbReference type="InterPro" id="IPR022975">
    <property type="entry name" value="Pyrim_hydro_RihA"/>
</dbReference>
<dbReference type="InterPro" id="IPR036452">
    <property type="entry name" value="Ribo_hydro-like"/>
</dbReference>
<dbReference type="NCBIfam" id="NF007761">
    <property type="entry name" value="PRK10443.1"/>
    <property type="match status" value="1"/>
</dbReference>
<dbReference type="PANTHER" id="PTHR12304">
    <property type="entry name" value="INOSINE-URIDINE PREFERRING NUCLEOSIDE HYDROLASE"/>
    <property type="match status" value="1"/>
</dbReference>
<dbReference type="PANTHER" id="PTHR12304:SF4">
    <property type="entry name" value="URIDINE NUCLEOSIDASE"/>
    <property type="match status" value="1"/>
</dbReference>
<dbReference type="Pfam" id="PF01156">
    <property type="entry name" value="IU_nuc_hydro"/>
    <property type="match status" value="1"/>
</dbReference>
<dbReference type="SUPFAM" id="SSF53590">
    <property type="entry name" value="Nucleoside hydrolase"/>
    <property type="match status" value="1"/>
</dbReference>
<dbReference type="PROSITE" id="PS01247">
    <property type="entry name" value="IUNH"/>
    <property type="match status" value="1"/>
</dbReference>
<keyword id="KW-0326">Glycosidase</keyword>
<keyword id="KW-0378">Hydrolase</keyword>
<proteinExistence type="inferred from homology"/>